<accession>Q83MF7</accession>
<accession>Q7UDS4</accession>
<feature type="chain" id="PRO_0000177873" description="D-alanine--D-alanine ligase B">
    <location>
        <begin position="1"/>
        <end position="306"/>
    </location>
</feature>
<feature type="domain" description="ATP-grasp" evidence="2">
    <location>
        <begin position="101"/>
        <end position="303"/>
    </location>
</feature>
<feature type="binding site" evidence="2">
    <location>
        <begin position="134"/>
        <end position="189"/>
    </location>
    <ligand>
        <name>ATP</name>
        <dbReference type="ChEBI" id="CHEBI:30616"/>
    </ligand>
</feature>
<feature type="binding site" evidence="2">
    <location>
        <position position="257"/>
    </location>
    <ligand>
        <name>Mg(2+)</name>
        <dbReference type="ChEBI" id="CHEBI:18420"/>
        <label>1</label>
    </ligand>
</feature>
<feature type="binding site" evidence="2">
    <location>
        <position position="270"/>
    </location>
    <ligand>
        <name>Mg(2+)</name>
        <dbReference type="ChEBI" id="CHEBI:18420"/>
        <label>1</label>
    </ligand>
</feature>
<feature type="binding site" evidence="2">
    <location>
        <position position="270"/>
    </location>
    <ligand>
        <name>Mg(2+)</name>
        <dbReference type="ChEBI" id="CHEBI:18420"/>
        <label>2</label>
    </ligand>
</feature>
<feature type="binding site" evidence="2">
    <location>
        <position position="272"/>
    </location>
    <ligand>
        <name>Mg(2+)</name>
        <dbReference type="ChEBI" id="CHEBI:18420"/>
        <label>2</label>
    </ligand>
</feature>
<feature type="sequence conflict" description="In Ref. 2; AAP15635." evidence="3" ref="2">
    <original>R</original>
    <variation>P</variation>
    <location>
        <position position="65"/>
    </location>
</feature>
<protein>
    <recommendedName>
        <fullName evidence="2">D-alanine--D-alanine ligase B</fullName>
        <ecNumber evidence="2">6.3.2.4</ecNumber>
    </recommendedName>
    <alternativeName>
        <fullName evidence="2">D-Ala-D-Ala ligase B</fullName>
    </alternativeName>
    <alternativeName>
        <fullName evidence="2">D-alanylalanine synthetase B</fullName>
    </alternativeName>
</protein>
<dbReference type="EC" id="6.3.2.4" evidence="2"/>
<dbReference type="EMBL" id="AE005674">
    <property type="protein sequence ID" value="AAN41754.1"/>
    <property type="molecule type" value="Genomic_DNA"/>
</dbReference>
<dbReference type="EMBL" id="AE014073">
    <property type="protein sequence ID" value="AAP15635.1"/>
    <property type="molecule type" value="Genomic_DNA"/>
</dbReference>
<dbReference type="RefSeq" id="WP_000130035.1">
    <property type="nucleotide sequence ID" value="NZ_WPGW01000007.1"/>
</dbReference>
<dbReference type="SMR" id="Q83MF7"/>
<dbReference type="STRING" id="198214.SF0089"/>
<dbReference type="PaxDb" id="198214-SF0089"/>
<dbReference type="KEGG" id="sfl:SF0089"/>
<dbReference type="KEGG" id="sfx:S0091"/>
<dbReference type="PATRIC" id="fig|198214.7.peg.104"/>
<dbReference type="HOGENOM" id="CLU_039268_1_2_6"/>
<dbReference type="UniPathway" id="UPA00219"/>
<dbReference type="Proteomes" id="UP000001006">
    <property type="component" value="Chromosome"/>
</dbReference>
<dbReference type="Proteomes" id="UP000002673">
    <property type="component" value="Chromosome"/>
</dbReference>
<dbReference type="GO" id="GO:0005829">
    <property type="term" value="C:cytosol"/>
    <property type="evidence" value="ECO:0007669"/>
    <property type="project" value="TreeGrafter"/>
</dbReference>
<dbReference type="GO" id="GO:0005524">
    <property type="term" value="F:ATP binding"/>
    <property type="evidence" value="ECO:0007669"/>
    <property type="project" value="UniProtKB-KW"/>
</dbReference>
<dbReference type="GO" id="GO:0008716">
    <property type="term" value="F:D-alanine-D-alanine ligase activity"/>
    <property type="evidence" value="ECO:0007669"/>
    <property type="project" value="UniProtKB-UniRule"/>
</dbReference>
<dbReference type="GO" id="GO:0046872">
    <property type="term" value="F:metal ion binding"/>
    <property type="evidence" value="ECO:0007669"/>
    <property type="project" value="UniProtKB-KW"/>
</dbReference>
<dbReference type="GO" id="GO:0071555">
    <property type="term" value="P:cell wall organization"/>
    <property type="evidence" value="ECO:0007669"/>
    <property type="project" value="UniProtKB-KW"/>
</dbReference>
<dbReference type="GO" id="GO:0009252">
    <property type="term" value="P:peptidoglycan biosynthetic process"/>
    <property type="evidence" value="ECO:0007669"/>
    <property type="project" value="UniProtKB-UniRule"/>
</dbReference>
<dbReference type="GO" id="GO:0008360">
    <property type="term" value="P:regulation of cell shape"/>
    <property type="evidence" value="ECO:0007669"/>
    <property type="project" value="UniProtKB-KW"/>
</dbReference>
<dbReference type="FunFam" id="3.30.1490.20:FF:000007">
    <property type="entry name" value="D-alanine--D-alanine ligase"/>
    <property type="match status" value="1"/>
</dbReference>
<dbReference type="FunFam" id="3.30.470.20:FF:000008">
    <property type="entry name" value="D-alanine--D-alanine ligase"/>
    <property type="match status" value="1"/>
</dbReference>
<dbReference type="FunFam" id="3.40.50.20:FF:000013">
    <property type="entry name" value="D-alanine--D-alanine ligase"/>
    <property type="match status" value="1"/>
</dbReference>
<dbReference type="Gene3D" id="3.40.50.20">
    <property type="match status" value="1"/>
</dbReference>
<dbReference type="Gene3D" id="3.30.1490.20">
    <property type="entry name" value="ATP-grasp fold, A domain"/>
    <property type="match status" value="1"/>
</dbReference>
<dbReference type="Gene3D" id="3.30.470.20">
    <property type="entry name" value="ATP-grasp fold, B domain"/>
    <property type="match status" value="1"/>
</dbReference>
<dbReference type="HAMAP" id="MF_00047">
    <property type="entry name" value="Dala_Dala_lig"/>
    <property type="match status" value="1"/>
</dbReference>
<dbReference type="InterPro" id="IPR011761">
    <property type="entry name" value="ATP-grasp"/>
</dbReference>
<dbReference type="InterPro" id="IPR013815">
    <property type="entry name" value="ATP_grasp_subdomain_1"/>
</dbReference>
<dbReference type="InterPro" id="IPR000291">
    <property type="entry name" value="D-Ala_lig_Van_CS"/>
</dbReference>
<dbReference type="InterPro" id="IPR005905">
    <property type="entry name" value="D_ala_D_ala"/>
</dbReference>
<dbReference type="InterPro" id="IPR011095">
    <property type="entry name" value="Dala_Dala_lig_C"/>
</dbReference>
<dbReference type="InterPro" id="IPR011127">
    <property type="entry name" value="Dala_Dala_lig_N"/>
</dbReference>
<dbReference type="InterPro" id="IPR016185">
    <property type="entry name" value="PreATP-grasp_dom_sf"/>
</dbReference>
<dbReference type="NCBIfam" id="TIGR01205">
    <property type="entry name" value="D_ala_D_alaTIGR"/>
    <property type="match status" value="1"/>
</dbReference>
<dbReference type="NCBIfam" id="NF002378">
    <property type="entry name" value="PRK01372.1"/>
    <property type="match status" value="1"/>
</dbReference>
<dbReference type="PANTHER" id="PTHR23132">
    <property type="entry name" value="D-ALANINE--D-ALANINE LIGASE"/>
    <property type="match status" value="1"/>
</dbReference>
<dbReference type="PANTHER" id="PTHR23132:SF23">
    <property type="entry name" value="D-ALANINE--D-ALANINE LIGASE B"/>
    <property type="match status" value="1"/>
</dbReference>
<dbReference type="Pfam" id="PF07478">
    <property type="entry name" value="Dala_Dala_lig_C"/>
    <property type="match status" value="1"/>
</dbReference>
<dbReference type="Pfam" id="PF01820">
    <property type="entry name" value="Dala_Dala_lig_N"/>
    <property type="match status" value="1"/>
</dbReference>
<dbReference type="PIRSF" id="PIRSF039102">
    <property type="entry name" value="Ddl/VanB"/>
    <property type="match status" value="1"/>
</dbReference>
<dbReference type="SUPFAM" id="SSF56059">
    <property type="entry name" value="Glutathione synthetase ATP-binding domain-like"/>
    <property type="match status" value="1"/>
</dbReference>
<dbReference type="SUPFAM" id="SSF52440">
    <property type="entry name" value="PreATP-grasp domain"/>
    <property type="match status" value="1"/>
</dbReference>
<dbReference type="PROSITE" id="PS50975">
    <property type="entry name" value="ATP_GRASP"/>
    <property type="match status" value="1"/>
</dbReference>
<dbReference type="PROSITE" id="PS00843">
    <property type="entry name" value="DALA_DALA_LIGASE_1"/>
    <property type="match status" value="1"/>
</dbReference>
<dbReference type="PROSITE" id="PS00844">
    <property type="entry name" value="DALA_DALA_LIGASE_2"/>
    <property type="match status" value="1"/>
</dbReference>
<keyword id="KW-0067">ATP-binding</keyword>
<keyword id="KW-0133">Cell shape</keyword>
<keyword id="KW-0961">Cell wall biogenesis/degradation</keyword>
<keyword id="KW-0963">Cytoplasm</keyword>
<keyword id="KW-0436">Ligase</keyword>
<keyword id="KW-0460">Magnesium</keyword>
<keyword id="KW-0464">Manganese</keyword>
<keyword id="KW-0479">Metal-binding</keyword>
<keyword id="KW-0547">Nucleotide-binding</keyword>
<keyword id="KW-0573">Peptidoglycan synthesis</keyword>
<keyword id="KW-1185">Reference proteome</keyword>
<gene>
    <name evidence="2" type="primary">ddlB</name>
    <name type="ordered locus">SF0089</name>
    <name type="ordered locus">S0091</name>
</gene>
<name>DDLB_SHIFL</name>
<reference key="1">
    <citation type="journal article" date="2002" name="Nucleic Acids Res.">
        <title>Genome sequence of Shigella flexneri 2a: insights into pathogenicity through comparison with genomes of Escherichia coli K12 and O157.</title>
        <authorList>
            <person name="Jin Q."/>
            <person name="Yuan Z."/>
            <person name="Xu J."/>
            <person name="Wang Y."/>
            <person name="Shen Y."/>
            <person name="Lu W."/>
            <person name="Wang J."/>
            <person name="Liu H."/>
            <person name="Yang J."/>
            <person name="Yang F."/>
            <person name="Zhang X."/>
            <person name="Zhang J."/>
            <person name="Yang G."/>
            <person name="Wu H."/>
            <person name="Qu D."/>
            <person name="Dong J."/>
            <person name="Sun L."/>
            <person name="Xue Y."/>
            <person name="Zhao A."/>
            <person name="Gao Y."/>
            <person name="Zhu J."/>
            <person name="Kan B."/>
            <person name="Ding K."/>
            <person name="Chen S."/>
            <person name="Cheng H."/>
            <person name="Yao Z."/>
            <person name="He B."/>
            <person name="Chen R."/>
            <person name="Ma D."/>
            <person name="Qiang B."/>
            <person name="Wen Y."/>
            <person name="Hou Y."/>
            <person name="Yu J."/>
        </authorList>
    </citation>
    <scope>NUCLEOTIDE SEQUENCE [LARGE SCALE GENOMIC DNA]</scope>
    <source>
        <strain>301 / Serotype 2a</strain>
    </source>
</reference>
<reference key="2">
    <citation type="journal article" date="2003" name="Infect. Immun.">
        <title>Complete genome sequence and comparative genomics of Shigella flexneri serotype 2a strain 2457T.</title>
        <authorList>
            <person name="Wei J."/>
            <person name="Goldberg M.B."/>
            <person name="Burland V."/>
            <person name="Venkatesan M.M."/>
            <person name="Deng W."/>
            <person name="Fournier G."/>
            <person name="Mayhew G.F."/>
            <person name="Plunkett G. III"/>
            <person name="Rose D.J."/>
            <person name="Darling A."/>
            <person name="Mau B."/>
            <person name="Perna N.T."/>
            <person name="Payne S.M."/>
            <person name="Runyen-Janecky L.J."/>
            <person name="Zhou S."/>
            <person name="Schwartz D.C."/>
            <person name="Blattner F.R."/>
        </authorList>
    </citation>
    <scope>NUCLEOTIDE SEQUENCE [LARGE SCALE GENOMIC DNA]</scope>
    <source>
        <strain>ATCC 700930 / 2457T / Serotype 2a</strain>
    </source>
</reference>
<comment type="function">
    <text evidence="2">Cell wall formation.</text>
</comment>
<comment type="catalytic activity">
    <reaction evidence="2">
        <text>2 D-alanine + ATP = D-alanyl-D-alanine + ADP + phosphate + H(+)</text>
        <dbReference type="Rhea" id="RHEA:11224"/>
        <dbReference type="ChEBI" id="CHEBI:15378"/>
        <dbReference type="ChEBI" id="CHEBI:30616"/>
        <dbReference type="ChEBI" id="CHEBI:43474"/>
        <dbReference type="ChEBI" id="CHEBI:57416"/>
        <dbReference type="ChEBI" id="CHEBI:57822"/>
        <dbReference type="ChEBI" id="CHEBI:456216"/>
        <dbReference type="EC" id="6.3.2.4"/>
    </reaction>
</comment>
<comment type="cofactor">
    <cofactor evidence="1">
        <name>Mg(2+)</name>
        <dbReference type="ChEBI" id="CHEBI:18420"/>
    </cofactor>
    <cofactor evidence="1">
        <name>Mn(2+)</name>
        <dbReference type="ChEBI" id="CHEBI:29035"/>
    </cofactor>
    <text evidence="1">Binds 2 magnesium or manganese ions per subunit.</text>
</comment>
<comment type="pathway">
    <text evidence="2">Cell wall biogenesis; peptidoglycan biosynthesis.</text>
</comment>
<comment type="subcellular location">
    <subcellularLocation>
        <location evidence="2">Cytoplasm</location>
    </subcellularLocation>
</comment>
<comment type="similarity">
    <text evidence="2">Belongs to the D-alanine--D-alanine ligase family.</text>
</comment>
<organism>
    <name type="scientific">Shigella flexneri</name>
    <dbReference type="NCBI Taxonomy" id="623"/>
    <lineage>
        <taxon>Bacteria</taxon>
        <taxon>Pseudomonadati</taxon>
        <taxon>Pseudomonadota</taxon>
        <taxon>Gammaproteobacteria</taxon>
        <taxon>Enterobacterales</taxon>
        <taxon>Enterobacteriaceae</taxon>
        <taxon>Shigella</taxon>
    </lineage>
</organism>
<sequence>MTDKIAVLLGGTSAEREVSLNSGAAVLAGLREGGIDAYPVDPKEVDVTQLKSMGFQKVFIALHGRGGEDGTLQGMLELMGLPYTGSGVMASALSIDKLRSKLLWQGAGLPVAPWVALTRAEFEKGLSDKQLAEISALGLPVIVKPSREGSSVGMSKVVAENALQDALRLAFQHDEEVLIEKWLSGPEFTVAILGEEILPSIRIQPSGTFYDYEAKYLSDETQYFCPAGLEASQEANLQALVLKAWTTLGCKGWGRIDVMLDSDGQFYLLEANTSPGMTSHSLVPMAARQAGMSFSQLVVRILELAD</sequence>
<proteinExistence type="inferred from homology"/>
<evidence type="ECO:0000250" key="1"/>
<evidence type="ECO:0000255" key="2">
    <source>
        <dbReference type="HAMAP-Rule" id="MF_00047"/>
    </source>
</evidence>
<evidence type="ECO:0000305" key="3"/>